<proteinExistence type="inferred from homology"/>
<organism>
    <name type="scientific">Chelativorans sp. (strain BNC1)</name>
    <dbReference type="NCBI Taxonomy" id="266779"/>
    <lineage>
        <taxon>Bacteria</taxon>
        <taxon>Pseudomonadati</taxon>
        <taxon>Pseudomonadota</taxon>
        <taxon>Alphaproteobacteria</taxon>
        <taxon>Hyphomicrobiales</taxon>
        <taxon>Phyllobacteriaceae</taxon>
        <taxon>Chelativorans</taxon>
    </lineage>
</organism>
<accession>Q11HE1</accession>
<sequence length="476" mass="53538">MQVSEILNSGLKREIKITVPAEDMEARLMARLEDAKNKVRLKGFRPGKVPLQHLRRMYGKSFMAEVVNEILNDSSRTIISDRGEKPAMQPEISMTEDEKEAEKVLAGAADFEFSLSYEVIPPIEIKDLAGIKITRPVYDVPDEEVDEQVKRVADSVRTYEAKKGKAEKGDKVTLDYVGKLDGEPFDGGSANDSEVVIGHGQFIPGFEDELIGLKAGDTKTFKITFPETYGAQHLAGKEAEFDVTVKEVAAAEELVIDDELAKKLGLESAEKLREIIRSQLENQYGQMTRQKAKRQLLDALDESYKFEAPSKLVEAEFNNIWSQVTRDLESAGRTFEDEETTEDDARQEYQRLAERRVRLGLVLAQIGEEASIQVSDDEMQRALIETIRRYPAQQQQEIYDFYRQNPQALASVRAPLFEEKVVDQLLSQVDVTDQKVSRDELLAEDEAEGEEKKAAGETKKKAAPKKKAAKKESAAE</sequence>
<keyword id="KW-0131">Cell cycle</keyword>
<keyword id="KW-0132">Cell division</keyword>
<keyword id="KW-0143">Chaperone</keyword>
<keyword id="KW-0963">Cytoplasm</keyword>
<keyword id="KW-0413">Isomerase</keyword>
<keyword id="KW-0697">Rotamase</keyword>
<name>TIG_CHESB</name>
<evidence type="ECO:0000255" key="1">
    <source>
        <dbReference type="HAMAP-Rule" id="MF_00303"/>
    </source>
</evidence>
<evidence type="ECO:0000256" key="2">
    <source>
        <dbReference type="SAM" id="MobiDB-lite"/>
    </source>
</evidence>
<gene>
    <name evidence="1" type="primary">tig</name>
    <name type="ordered locus">Meso_1790</name>
</gene>
<reference key="1">
    <citation type="submission" date="2006-06" db="EMBL/GenBank/DDBJ databases">
        <title>Complete sequence of chromosome of Mesorhizobium sp. BNC1.</title>
        <authorList>
            <consortium name="US DOE Joint Genome Institute"/>
            <person name="Copeland A."/>
            <person name="Lucas S."/>
            <person name="Lapidus A."/>
            <person name="Barry K."/>
            <person name="Detter J.C."/>
            <person name="Glavina del Rio T."/>
            <person name="Hammon N."/>
            <person name="Israni S."/>
            <person name="Dalin E."/>
            <person name="Tice H."/>
            <person name="Pitluck S."/>
            <person name="Chertkov O."/>
            <person name="Brettin T."/>
            <person name="Bruce D."/>
            <person name="Han C."/>
            <person name="Tapia R."/>
            <person name="Gilna P."/>
            <person name="Schmutz J."/>
            <person name="Larimer F."/>
            <person name="Land M."/>
            <person name="Hauser L."/>
            <person name="Kyrpides N."/>
            <person name="Mikhailova N."/>
            <person name="Richardson P."/>
        </authorList>
    </citation>
    <scope>NUCLEOTIDE SEQUENCE [LARGE SCALE GENOMIC DNA]</scope>
    <source>
        <strain>BNC1</strain>
    </source>
</reference>
<feature type="chain" id="PRO_0000256572" description="Trigger factor">
    <location>
        <begin position="1"/>
        <end position="476"/>
    </location>
</feature>
<feature type="domain" description="PPIase FKBP-type" evidence="1">
    <location>
        <begin position="169"/>
        <end position="254"/>
    </location>
</feature>
<feature type="region of interest" description="Disordered" evidence="2">
    <location>
        <begin position="437"/>
        <end position="476"/>
    </location>
</feature>
<feature type="compositionally biased region" description="Basic and acidic residues" evidence="2">
    <location>
        <begin position="450"/>
        <end position="460"/>
    </location>
</feature>
<dbReference type="EC" id="5.2.1.8" evidence="1"/>
<dbReference type="EMBL" id="CP000390">
    <property type="protein sequence ID" value="ABG63184.1"/>
    <property type="molecule type" value="Genomic_DNA"/>
</dbReference>
<dbReference type="SMR" id="Q11HE1"/>
<dbReference type="STRING" id="266779.Meso_1790"/>
<dbReference type="KEGG" id="mes:Meso_1790"/>
<dbReference type="eggNOG" id="COG0544">
    <property type="taxonomic scope" value="Bacteria"/>
</dbReference>
<dbReference type="HOGENOM" id="CLU_033058_2_2_5"/>
<dbReference type="OrthoDB" id="9767721at2"/>
<dbReference type="GO" id="GO:0005737">
    <property type="term" value="C:cytoplasm"/>
    <property type="evidence" value="ECO:0007669"/>
    <property type="project" value="UniProtKB-SubCell"/>
</dbReference>
<dbReference type="GO" id="GO:0003755">
    <property type="term" value="F:peptidyl-prolyl cis-trans isomerase activity"/>
    <property type="evidence" value="ECO:0007669"/>
    <property type="project" value="UniProtKB-UniRule"/>
</dbReference>
<dbReference type="GO" id="GO:0044183">
    <property type="term" value="F:protein folding chaperone"/>
    <property type="evidence" value="ECO:0007669"/>
    <property type="project" value="TreeGrafter"/>
</dbReference>
<dbReference type="GO" id="GO:0043022">
    <property type="term" value="F:ribosome binding"/>
    <property type="evidence" value="ECO:0007669"/>
    <property type="project" value="TreeGrafter"/>
</dbReference>
<dbReference type="GO" id="GO:0051083">
    <property type="term" value="P:'de novo' cotranslational protein folding"/>
    <property type="evidence" value="ECO:0007669"/>
    <property type="project" value="TreeGrafter"/>
</dbReference>
<dbReference type="GO" id="GO:0051301">
    <property type="term" value="P:cell division"/>
    <property type="evidence" value="ECO:0007669"/>
    <property type="project" value="UniProtKB-KW"/>
</dbReference>
<dbReference type="GO" id="GO:0061077">
    <property type="term" value="P:chaperone-mediated protein folding"/>
    <property type="evidence" value="ECO:0007669"/>
    <property type="project" value="TreeGrafter"/>
</dbReference>
<dbReference type="GO" id="GO:0015031">
    <property type="term" value="P:protein transport"/>
    <property type="evidence" value="ECO:0007669"/>
    <property type="project" value="UniProtKB-UniRule"/>
</dbReference>
<dbReference type="GO" id="GO:0043335">
    <property type="term" value="P:protein unfolding"/>
    <property type="evidence" value="ECO:0007669"/>
    <property type="project" value="TreeGrafter"/>
</dbReference>
<dbReference type="FunFam" id="3.10.50.40:FF:000001">
    <property type="entry name" value="Trigger factor"/>
    <property type="match status" value="1"/>
</dbReference>
<dbReference type="Gene3D" id="3.10.50.40">
    <property type="match status" value="1"/>
</dbReference>
<dbReference type="Gene3D" id="3.30.70.1050">
    <property type="entry name" value="Trigger factor ribosome-binding domain"/>
    <property type="match status" value="1"/>
</dbReference>
<dbReference type="Gene3D" id="1.10.3120.10">
    <property type="entry name" value="Trigger factor, C-terminal domain"/>
    <property type="match status" value="1"/>
</dbReference>
<dbReference type="HAMAP" id="MF_00303">
    <property type="entry name" value="Trigger_factor_Tig"/>
    <property type="match status" value="1"/>
</dbReference>
<dbReference type="InterPro" id="IPR046357">
    <property type="entry name" value="PPIase_dom_sf"/>
</dbReference>
<dbReference type="InterPro" id="IPR001179">
    <property type="entry name" value="PPIase_FKBP_dom"/>
</dbReference>
<dbReference type="InterPro" id="IPR005215">
    <property type="entry name" value="Trig_fac"/>
</dbReference>
<dbReference type="InterPro" id="IPR008880">
    <property type="entry name" value="Trigger_fac_C"/>
</dbReference>
<dbReference type="InterPro" id="IPR037041">
    <property type="entry name" value="Trigger_fac_C_sf"/>
</dbReference>
<dbReference type="InterPro" id="IPR008881">
    <property type="entry name" value="Trigger_fac_ribosome-bd_bac"/>
</dbReference>
<dbReference type="InterPro" id="IPR036611">
    <property type="entry name" value="Trigger_fac_ribosome-bd_sf"/>
</dbReference>
<dbReference type="InterPro" id="IPR027304">
    <property type="entry name" value="Trigger_fact/SurA_dom_sf"/>
</dbReference>
<dbReference type="NCBIfam" id="TIGR00115">
    <property type="entry name" value="tig"/>
    <property type="match status" value="1"/>
</dbReference>
<dbReference type="PANTHER" id="PTHR30560">
    <property type="entry name" value="TRIGGER FACTOR CHAPERONE AND PEPTIDYL-PROLYL CIS/TRANS ISOMERASE"/>
    <property type="match status" value="1"/>
</dbReference>
<dbReference type="PANTHER" id="PTHR30560:SF3">
    <property type="entry name" value="TRIGGER FACTOR-LIKE PROTEIN TIG, CHLOROPLASTIC"/>
    <property type="match status" value="1"/>
</dbReference>
<dbReference type="Pfam" id="PF00254">
    <property type="entry name" value="FKBP_C"/>
    <property type="match status" value="1"/>
</dbReference>
<dbReference type="Pfam" id="PF05698">
    <property type="entry name" value="Trigger_C"/>
    <property type="match status" value="1"/>
</dbReference>
<dbReference type="Pfam" id="PF05697">
    <property type="entry name" value="Trigger_N"/>
    <property type="match status" value="1"/>
</dbReference>
<dbReference type="PIRSF" id="PIRSF003095">
    <property type="entry name" value="Trigger_factor"/>
    <property type="match status" value="1"/>
</dbReference>
<dbReference type="SUPFAM" id="SSF54534">
    <property type="entry name" value="FKBP-like"/>
    <property type="match status" value="1"/>
</dbReference>
<dbReference type="SUPFAM" id="SSF109998">
    <property type="entry name" value="Triger factor/SurA peptide-binding domain-like"/>
    <property type="match status" value="1"/>
</dbReference>
<dbReference type="SUPFAM" id="SSF102735">
    <property type="entry name" value="Trigger factor ribosome-binding domain"/>
    <property type="match status" value="1"/>
</dbReference>
<dbReference type="PROSITE" id="PS50059">
    <property type="entry name" value="FKBP_PPIASE"/>
    <property type="match status" value="1"/>
</dbReference>
<protein>
    <recommendedName>
        <fullName evidence="1">Trigger factor</fullName>
        <shortName evidence="1">TF</shortName>
        <ecNumber evidence="1">5.2.1.8</ecNumber>
    </recommendedName>
    <alternativeName>
        <fullName evidence="1">PPIase</fullName>
    </alternativeName>
</protein>
<comment type="function">
    <text evidence="1">Involved in protein export. Acts as a chaperone by maintaining the newly synthesized protein in an open conformation. Functions as a peptidyl-prolyl cis-trans isomerase.</text>
</comment>
<comment type="catalytic activity">
    <reaction evidence="1">
        <text>[protein]-peptidylproline (omega=180) = [protein]-peptidylproline (omega=0)</text>
        <dbReference type="Rhea" id="RHEA:16237"/>
        <dbReference type="Rhea" id="RHEA-COMP:10747"/>
        <dbReference type="Rhea" id="RHEA-COMP:10748"/>
        <dbReference type="ChEBI" id="CHEBI:83833"/>
        <dbReference type="ChEBI" id="CHEBI:83834"/>
        <dbReference type="EC" id="5.2.1.8"/>
    </reaction>
</comment>
<comment type="subcellular location">
    <subcellularLocation>
        <location>Cytoplasm</location>
    </subcellularLocation>
    <text evidence="1">About half TF is bound to the ribosome near the polypeptide exit tunnel while the other half is free in the cytoplasm.</text>
</comment>
<comment type="domain">
    <text evidence="1">Consists of 3 domains; the N-terminus binds the ribosome, the middle domain has PPIase activity, while the C-terminus has intrinsic chaperone activity on its own.</text>
</comment>
<comment type="similarity">
    <text evidence="1">Belongs to the FKBP-type PPIase family. Tig subfamily.</text>
</comment>